<keyword id="KW-1185">Reference proteome</keyword>
<keyword id="KW-0687">Ribonucleoprotein</keyword>
<keyword id="KW-0689">Ribosomal protein</keyword>
<feature type="chain" id="PRO_0000258730" description="Large ribosomal subunit protein bL35">
    <location>
        <begin position="1"/>
        <end position="65"/>
    </location>
</feature>
<accession>Q4FQ63</accession>
<comment type="similarity">
    <text evidence="1">Belongs to the bacterial ribosomal protein bL35 family.</text>
</comment>
<gene>
    <name evidence="1" type="primary">rpmI</name>
    <name type="ordered locus">Psyc_1998</name>
</gene>
<protein>
    <recommendedName>
        <fullName evidence="1">Large ribosomal subunit protein bL35</fullName>
    </recommendedName>
    <alternativeName>
        <fullName evidence="2">50S ribosomal protein L35</fullName>
    </alternativeName>
</protein>
<proteinExistence type="inferred from homology"/>
<dbReference type="EMBL" id="CP000082">
    <property type="protein sequence ID" value="AAZ19845.1"/>
    <property type="molecule type" value="Genomic_DNA"/>
</dbReference>
<dbReference type="RefSeq" id="WP_011281253.1">
    <property type="nucleotide sequence ID" value="NC_007204.1"/>
</dbReference>
<dbReference type="SMR" id="Q4FQ63"/>
<dbReference type="STRING" id="259536.Psyc_1998"/>
<dbReference type="KEGG" id="par:Psyc_1998"/>
<dbReference type="eggNOG" id="COG0291">
    <property type="taxonomic scope" value="Bacteria"/>
</dbReference>
<dbReference type="HOGENOM" id="CLU_169643_1_1_6"/>
<dbReference type="OrthoDB" id="47476at2"/>
<dbReference type="Proteomes" id="UP000000546">
    <property type="component" value="Chromosome"/>
</dbReference>
<dbReference type="GO" id="GO:0022625">
    <property type="term" value="C:cytosolic large ribosomal subunit"/>
    <property type="evidence" value="ECO:0007669"/>
    <property type="project" value="TreeGrafter"/>
</dbReference>
<dbReference type="GO" id="GO:0003735">
    <property type="term" value="F:structural constituent of ribosome"/>
    <property type="evidence" value="ECO:0007669"/>
    <property type="project" value="InterPro"/>
</dbReference>
<dbReference type="GO" id="GO:0006412">
    <property type="term" value="P:translation"/>
    <property type="evidence" value="ECO:0007669"/>
    <property type="project" value="UniProtKB-UniRule"/>
</dbReference>
<dbReference type="FunFam" id="4.10.410.60:FF:000001">
    <property type="entry name" value="50S ribosomal protein L35"/>
    <property type="match status" value="1"/>
</dbReference>
<dbReference type="Gene3D" id="4.10.410.60">
    <property type="match status" value="1"/>
</dbReference>
<dbReference type="HAMAP" id="MF_00514">
    <property type="entry name" value="Ribosomal_bL35"/>
    <property type="match status" value="1"/>
</dbReference>
<dbReference type="InterPro" id="IPR001706">
    <property type="entry name" value="Ribosomal_bL35"/>
</dbReference>
<dbReference type="InterPro" id="IPR021137">
    <property type="entry name" value="Ribosomal_bL35-like"/>
</dbReference>
<dbReference type="InterPro" id="IPR018265">
    <property type="entry name" value="Ribosomal_bL35_CS"/>
</dbReference>
<dbReference type="InterPro" id="IPR037229">
    <property type="entry name" value="Ribosomal_bL35_sf"/>
</dbReference>
<dbReference type="NCBIfam" id="TIGR00001">
    <property type="entry name" value="rpmI_bact"/>
    <property type="match status" value="1"/>
</dbReference>
<dbReference type="PANTHER" id="PTHR33343">
    <property type="entry name" value="54S RIBOSOMAL PROTEIN BL35M"/>
    <property type="match status" value="1"/>
</dbReference>
<dbReference type="PANTHER" id="PTHR33343:SF1">
    <property type="entry name" value="LARGE RIBOSOMAL SUBUNIT PROTEIN BL35M"/>
    <property type="match status" value="1"/>
</dbReference>
<dbReference type="Pfam" id="PF01632">
    <property type="entry name" value="Ribosomal_L35p"/>
    <property type="match status" value="1"/>
</dbReference>
<dbReference type="PRINTS" id="PR00064">
    <property type="entry name" value="RIBOSOMALL35"/>
</dbReference>
<dbReference type="SUPFAM" id="SSF143034">
    <property type="entry name" value="L35p-like"/>
    <property type="match status" value="1"/>
</dbReference>
<dbReference type="PROSITE" id="PS00936">
    <property type="entry name" value="RIBOSOMAL_L35"/>
    <property type="match status" value="1"/>
</dbReference>
<name>RL35_PSYA2</name>
<organism>
    <name type="scientific">Psychrobacter arcticus (strain DSM 17307 / VKM B-2377 / 273-4)</name>
    <dbReference type="NCBI Taxonomy" id="259536"/>
    <lineage>
        <taxon>Bacteria</taxon>
        <taxon>Pseudomonadati</taxon>
        <taxon>Pseudomonadota</taxon>
        <taxon>Gammaproteobacteria</taxon>
        <taxon>Moraxellales</taxon>
        <taxon>Moraxellaceae</taxon>
        <taxon>Psychrobacter</taxon>
    </lineage>
</organism>
<reference key="1">
    <citation type="journal article" date="2010" name="Appl. Environ. Microbiol.">
        <title>The genome sequence of Psychrobacter arcticus 273-4, a psychroactive Siberian permafrost bacterium, reveals mechanisms for adaptation to low-temperature growth.</title>
        <authorList>
            <person name="Ayala-del-Rio H.L."/>
            <person name="Chain P.S."/>
            <person name="Grzymski J.J."/>
            <person name="Ponder M.A."/>
            <person name="Ivanova N."/>
            <person name="Bergholz P.W."/>
            <person name="Di Bartolo G."/>
            <person name="Hauser L."/>
            <person name="Land M."/>
            <person name="Bakermans C."/>
            <person name="Rodrigues D."/>
            <person name="Klappenbach J."/>
            <person name="Zarka D."/>
            <person name="Larimer F."/>
            <person name="Richardson P."/>
            <person name="Murray A."/>
            <person name="Thomashow M."/>
            <person name="Tiedje J.M."/>
        </authorList>
    </citation>
    <scope>NUCLEOTIDE SEQUENCE [LARGE SCALE GENOMIC DNA]</scope>
    <source>
        <strain>DSM 17307 / VKM B-2377 / 273-4</strain>
    </source>
</reference>
<sequence length="65" mass="7555">MKVKMKTRSGAAKRFKKTANGFKRKQAFKSHILTKKSAKRIRQLRGLKMVDKSDEAAVRRMCPYI</sequence>
<evidence type="ECO:0000255" key="1">
    <source>
        <dbReference type="HAMAP-Rule" id="MF_00514"/>
    </source>
</evidence>
<evidence type="ECO:0000305" key="2"/>